<evidence type="ECO:0000250" key="1"/>
<evidence type="ECO:0000255" key="2"/>
<evidence type="ECO:0000256" key="3">
    <source>
        <dbReference type="SAM" id="MobiDB-lite"/>
    </source>
</evidence>
<evidence type="ECO:0000305" key="4"/>
<feature type="chain" id="PRO_0000308799" description="60S ribosomal subunit assembly/export protein loc-1">
    <location>
        <begin position="1"/>
        <end position="209"/>
    </location>
</feature>
<feature type="region of interest" description="Disordered" evidence="3">
    <location>
        <begin position="1"/>
        <end position="53"/>
    </location>
</feature>
<feature type="region of interest" description="Disordered" evidence="3">
    <location>
        <begin position="135"/>
        <end position="209"/>
    </location>
</feature>
<feature type="coiled-coil region" evidence="2">
    <location>
        <begin position="126"/>
        <end position="170"/>
    </location>
</feature>
<feature type="compositionally biased region" description="Basic and acidic residues" evidence="3">
    <location>
        <begin position="20"/>
        <end position="33"/>
    </location>
</feature>
<feature type="compositionally biased region" description="Basic and acidic residues" evidence="3">
    <location>
        <begin position="135"/>
        <end position="159"/>
    </location>
</feature>
<sequence>MAPTKTIKNKHAANKSGIKGSKDAERSRNDGVLKSKGKPKGKAHTLVTASKGRPNIQELIARKKKKKTYSEKELAIPELNMITPVGVTKPKGKKKGKVFVDDKESMATILAIVQAEKEGQIESKMIKARQMEEIREARRAEAEKKEAERKARLEETKDSLRKKRKRSKQSGGSKGDDDDDSRDVKEFSSAGTKAVKSKKKKSVSFAAPE</sequence>
<comment type="function">
    <text evidence="1">Required for efficient assembly and nuclear export of the 60S ribosomal subunit.</text>
</comment>
<comment type="subunit">
    <text evidence="1">Component of the 66S pre-ribosomal particle.</text>
</comment>
<comment type="subcellular location">
    <subcellularLocation>
        <location evidence="1">Nucleus</location>
        <location evidence="1">Nucleolus</location>
    </subcellularLocation>
</comment>
<comment type="similarity">
    <text evidence="4">Belongs to the LOC1 family.</text>
</comment>
<keyword id="KW-0175">Coiled coil</keyword>
<keyword id="KW-0509">mRNA transport</keyword>
<keyword id="KW-0539">Nucleus</keyword>
<keyword id="KW-1185">Reference proteome</keyword>
<keyword id="KW-0690">Ribosome biogenesis</keyword>
<keyword id="KW-0813">Transport</keyword>
<dbReference type="EMBL" id="AL451021">
    <property type="protein sequence ID" value="CAC18288.1"/>
    <property type="molecule type" value="Genomic_DNA"/>
</dbReference>
<dbReference type="EMBL" id="CM002240">
    <property type="protein sequence ID" value="EAA32151.1"/>
    <property type="molecule type" value="Genomic_DNA"/>
</dbReference>
<dbReference type="RefSeq" id="XP_961387.1">
    <property type="nucleotide sequence ID" value="XM_956294.2"/>
</dbReference>
<dbReference type="SMR" id="Q9HEG2"/>
<dbReference type="FunCoup" id="Q9HEG2">
    <property type="interactions" value="314"/>
</dbReference>
<dbReference type="STRING" id="367110.Q9HEG2"/>
<dbReference type="PaxDb" id="5141-EFNCRP00000004178"/>
<dbReference type="EnsemblFungi" id="EAA32151">
    <property type="protein sequence ID" value="EAA32151"/>
    <property type="gene ID" value="NCU01301"/>
</dbReference>
<dbReference type="GeneID" id="3877531"/>
<dbReference type="KEGG" id="ncr:NCU01301"/>
<dbReference type="VEuPathDB" id="FungiDB:NCU01301"/>
<dbReference type="HOGENOM" id="CLU_096593_0_0_1"/>
<dbReference type="InParanoid" id="Q9HEG2"/>
<dbReference type="OMA" id="RESMNTI"/>
<dbReference type="OrthoDB" id="1743802at2759"/>
<dbReference type="Proteomes" id="UP000001805">
    <property type="component" value="Chromosome 2, Linkage Group V"/>
</dbReference>
<dbReference type="GO" id="GO:0005730">
    <property type="term" value="C:nucleolus"/>
    <property type="evidence" value="ECO:0000318"/>
    <property type="project" value="GO_Central"/>
</dbReference>
<dbReference type="GO" id="GO:0030687">
    <property type="term" value="C:preribosome, large subunit precursor"/>
    <property type="evidence" value="ECO:0000318"/>
    <property type="project" value="GO_Central"/>
</dbReference>
<dbReference type="GO" id="GO:0003729">
    <property type="term" value="F:mRNA binding"/>
    <property type="evidence" value="ECO:0000318"/>
    <property type="project" value="GO_Central"/>
</dbReference>
<dbReference type="GO" id="GO:0008298">
    <property type="term" value="P:intracellular mRNA localization"/>
    <property type="evidence" value="ECO:0000318"/>
    <property type="project" value="GO_Central"/>
</dbReference>
<dbReference type="GO" id="GO:0051028">
    <property type="term" value="P:mRNA transport"/>
    <property type="evidence" value="ECO:0007669"/>
    <property type="project" value="UniProtKB-KW"/>
</dbReference>
<dbReference type="GO" id="GO:0042273">
    <property type="term" value="P:ribosomal large subunit biogenesis"/>
    <property type="evidence" value="ECO:0000318"/>
    <property type="project" value="GO_Central"/>
</dbReference>
<dbReference type="InterPro" id="IPR037650">
    <property type="entry name" value="Loc1"/>
</dbReference>
<dbReference type="PANTHER" id="PTHR28028">
    <property type="entry name" value="60S RIBOSOMAL SUBUNIT ASSEMBLY/EXPORT PROTEIN LOC1"/>
    <property type="match status" value="1"/>
</dbReference>
<dbReference type="PANTHER" id="PTHR28028:SF1">
    <property type="entry name" value="60S RIBOSOMAL SUBUNIT ASSEMBLY_EXPORT PROTEIN LOC1"/>
    <property type="match status" value="1"/>
</dbReference>
<name>LOC1_NEUCR</name>
<proteinExistence type="inferred from homology"/>
<accession>Q9HEG2</accession>
<protein>
    <recommendedName>
        <fullName>60S ribosomal subunit assembly/export protein loc-1</fullName>
    </recommendedName>
</protein>
<organism>
    <name type="scientific">Neurospora crassa (strain ATCC 24698 / 74-OR23-1A / CBS 708.71 / DSM 1257 / FGSC 987)</name>
    <dbReference type="NCBI Taxonomy" id="367110"/>
    <lineage>
        <taxon>Eukaryota</taxon>
        <taxon>Fungi</taxon>
        <taxon>Dikarya</taxon>
        <taxon>Ascomycota</taxon>
        <taxon>Pezizomycotina</taxon>
        <taxon>Sordariomycetes</taxon>
        <taxon>Sordariomycetidae</taxon>
        <taxon>Sordariales</taxon>
        <taxon>Sordariaceae</taxon>
        <taxon>Neurospora</taxon>
    </lineage>
</organism>
<reference key="1">
    <citation type="journal article" date="2003" name="Nucleic Acids Res.">
        <title>What's in the genome of a filamentous fungus? Analysis of the Neurospora genome sequence.</title>
        <authorList>
            <person name="Mannhaupt G."/>
            <person name="Montrone C."/>
            <person name="Haase D."/>
            <person name="Mewes H.-W."/>
            <person name="Aign V."/>
            <person name="Hoheisel J.D."/>
            <person name="Fartmann B."/>
            <person name="Nyakatura G."/>
            <person name="Kempken F."/>
            <person name="Maier J."/>
            <person name="Schulte U."/>
        </authorList>
    </citation>
    <scope>NUCLEOTIDE SEQUENCE [LARGE SCALE GENOMIC DNA]</scope>
    <source>
        <strain>ATCC 24698 / 74-OR23-1A / CBS 708.71 / DSM 1257 / FGSC 987</strain>
    </source>
</reference>
<reference key="2">
    <citation type="journal article" date="2003" name="Nature">
        <title>The genome sequence of the filamentous fungus Neurospora crassa.</title>
        <authorList>
            <person name="Galagan J.E."/>
            <person name="Calvo S.E."/>
            <person name="Borkovich K.A."/>
            <person name="Selker E.U."/>
            <person name="Read N.D."/>
            <person name="Jaffe D.B."/>
            <person name="FitzHugh W."/>
            <person name="Ma L.-J."/>
            <person name="Smirnov S."/>
            <person name="Purcell S."/>
            <person name="Rehman B."/>
            <person name="Elkins T."/>
            <person name="Engels R."/>
            <person name="Wang S."/>
            <person name="Nielsen C.B."/>
            <person name="Butler J."/>
            <person name="Endrizzi M."/>
            <person name="Qui D."/>
            <person name="Ianakiev P."/>
            <person name="Bell-Pedersen D."/>
            <person name="Nelson M.A."/>
            <person name="Werner-Washburne M."/>
            <person name="Selitrennikoff C.P."/>
            <person name="Kinsey J.A."/>
            <person name="Braun E.L."/>
            <person name="Zelter A."/>
            <person name="Schulte U."/>
            <person name="Kothe G.O."/>
            <person name="Jedd G."/>
            <person name="Mewes H.-W."/>
            <person name="Staben C."/>
            <person name="Marcotte E."/>
            <person name="Greenberg D."/>
            <person name="Roy A."/>
            <person name="Foley K."/>
            <person name="Naylor J."/>
            <person name="Stange-Thomann N."/>
            <person name="Barrett R."/>
            <person name="Gnerre S."/>
            <person name="Kamal M."/>
            <person name="Kamvysselis M."/>
            <person name="Mauceli E.W."/>
            <person name="Bielke C."/>
            <person name="Rudd S."/>
            <person name="Frishman D."/>
            <person name="Krystofova S."/>
            <person name="Rasmussen C."/>
            <person name="Metzenberg R.L."/>
            <person name="Perkins D.D."/>
            <person name="Kroken S."/>
            <person name="Cogoni C."/>
            <person name="Macino G."/>
            <person name="Catcheside D.E.A."/>
            <person name="Li W."/>
            <person name="Pratt R.J."/>
            <person name="Osmani S.A."/>
            <person name="DeSouza C.P.C."/>
            <person name="Glass N.L."/>
            <person name="Orbach M.J."/>
            <person name="Berglund J.A."/>
            <person name="Voelker R."/>
            <person name="Yarden O."/>
            <person name="Plamann M."/>
            <person name="Seiler S."/>
            <person name="Dunlap J.C."/>
            <person name="Radford A."/>
            <person name="Aramayo R."/>
            <person name="Natvig D.O."/>
            <person name="Alex L.A."/>
            <person name="Mannhaupt G."/>
            <person name="Ebbole D.J."/>
            <person name="Freitag M."/>
            <person name="Paulsen I."/>
            <person name="Sachs M.S."/>
            <person name="Lander E.S."/>
            <person name="Nusbaum C."/>
            <person name="Birren B.W."/>
        </authorList>
    </citation>
    <scope>NUCLEOTIDE SEQUENCE [LARGE SCALE GENOMIC DNA]</scope>
    <source>
        <strain>ATCC 24698 / 74-OR23-1A / CBS 708.71 / DSM 1257 / FGSC 987</strain>
    </source>
</reference>
<gene>
    <name type="primary">loc-1</name>
    <name type="ORF">65E11.040</name>
    <name type="ORF">NCU01301</name>
</gene>